<name>NAS1_ORYSI</name>
<gene>
    <name type="primary">NAS1</name>
    <name type="ORF">OsI_010937</name>
</gene>
<reference key="1">
    <citation type="journal article" date="2001" name="Plant J.">
        <title>Nicotianamine synthase gene expression differs in barley and rice under Fe-deficient conditions.</title>
        <authorList>
            <person name="Higuchi K."/>
            <person name="Watanabe S."/>
            <person name="Takahashi M."/>
            <person name="Kawasaki S."/>
            <person name="Nakanishi H."/>
            <person name="Nishizawa N.-K."/>
            <person name="Mori S."/>
        </authorList>
    </citation>
    <scope>NUCLEOTIDE SEQUENCE [GENOMIC DNA / MRNA]</scope>
    <scope>FUNCTION</scope>
    <scope>TISSUE SPECIFICITY</scope>
    <scope>INDUCTION</scope>
    <source>
        <strain>cv. IR36</strain>
        <tissue>Root</tissue>
    </source>
</reference>
<reference key="2">
    <citation type="journal article" date="2005" name="PLoS Biol.">
        <title>The genomes of Oryza sativa: a history of duplications.</title>
        <authorList>
            <person name="Yu J."/>
            <person name="Wang J."/>
            <person name="Lin W."/>
            <person name="Li S."/>
            <person name="Li H."/>
            <person name="Zhou J."/>
            <person name="Ni P."/>
            <person name="Dong W."/>
            <person name="Hu S."/>
            <person name="Zeng C."/>
            <person name="Zhang J."/>
            <person name="Zhang Y."/>
            <person name="Li R."/>
            <person name="Xu Z."/>
            <person name="Li S."/>
            <person name="Li X."/>
            <person name="Zheng H."/>
            <person name="Cong L."/>
            <person name="Lin L."/>
            <person name="Yin J."/>
            <person name="Geng J."/>
            <person name="Li G."/>
            <person name="Shi J."/>
            <person name="Liu J."/>
            <person name="Lv H."/>
            <person name="Li J."/>
            <person name="Wang J."/>
            <person name="Deng Y."/>
            <person name="Ran L."/>
            <person name="Shi X."/>
            <person name="Wang X."/>
            <person name="Wu Q."/>
            <person name="Li C."/>
            <person name="Ren X."/>
            <person name="Wang J."/>
            <person name="Wang X."/>
            <person name="Li D."/>
            <person name="Liu D."/>
            <person name="Zhang X."/>
            <person name="Ji Z."/>
            <person name="Zhao W."/>
            <person name="Sun Y."/>
            <person name="Zhang Z."/>
            <person name="Bao J."/>
            <person name="Han Y."/>
            <person name="Dong L."/>
            <person name="Ji J."/>
            <person name="Chen P."/>
            <person name="Wu S."/>
            <person name="Liu J."/>
            <person name="Xiao Y."/>
            <person name="Bu D."/>
            <person name="Tan J."/>
            <person name="Yang L."/>
            <person name="Ye C."/>
            <person name="Zhang J."/>
            <person name="Xu J."/>
            <person name="Zhou Y."/>
            <person name="Yu Y."/>
            <person name="Zhang B."/>
            <person name="Zhuang S."/>
            <person name="Wei H."/>
            <person name="Liu B."/>
            <person name="Lei M."/>
            <person name="Yu H."/>
            <person name="Li Y."/>
            <person name="Xu H."/>
            <person name="Wei S."/>
            <person name="He X."/>
            <person name="Fang L."/>
            <person name="Zhang Z."/>
            <person name="Zhang Y."/>
            <person name="Huang X."/>
            <person name="Su Z."/>
            <person name="Tong W."/>
            <person name="Li J."/>
            <person name="Tong Z."/>
            <person name="Li S."/>
            <person name="Ye J."/>
            <person name="Wang L."/>
            <person name="Fang L."/>
            <person name="Lei T."/>
            <person name="Chen C.-S."/>
            <person name="Chen H.-C."/>
            <person name="Xu Z."/>
            <person name="Li H."/>
            <person name="Huang H."/>
            <person name="Zhang F."/>
            <person name="Xu H."/>
            <person name="Li N."/>
            <person name="Zhao C."/>
            <person name="Li S."/>
            <person name="Dong L."/>
            <person name="Huang Y."/>
            <person name="Li L."/>
            <person name="Xi Y."/>
            <person name="Qi Q."/>
            <person name="Li W."/>
            <person name="Zhang B."/>
            <person name="Hu W."/>
            <person name="Zhang Y."/>
            <person name="Tian X."/>
            <person name="Jiao Y."/>
            <person name="Liang X."/>
            <person name="Jin J."/>
            <person name="Gao L."/>
            <person name="Zheng W."/>
            <person name="Hao B."/>
            <person name="Liu S.-M."/>
            <person name="Wang W."/>
            <person name="Yuan L."/>
            <person name="Cao M."/>
            <person name="McDermott J."/>
            <person name="Samudrala R."/>
            <person name="Wang J."/>
            <person name="Wong G.K.-S."/>
            <person name="Yang H."/>
        </authorList>
    </citation>
    <scope>NUCLEOTIDE SEQUENCE [LARGE SCALE GENOMIC DNA]</scope>
    <source>
        <strain>cv. 93-11</strain>
    </source>
</reference>
<reference key="3">
    <citation type="journal article" date="2007" name="Plant Mol. Biol.">
        <title>A collection of 10,096 indica rice full-length cDNAs reveals highly expressed sequence divergence between Oryza sativa indica and japonica subspecies.</title>
        <authorList>
            <person name="Liu X."/>
            <person name="Lu T."/>
            <person name="Yu S."/>
            <person name="Li Y."/>
            <person name="Huang Y."/>
            <person name="Huang T."/>
            <person name="Zhang L."/>
            <person name="Zhu J."/>
            <person name="Zhao Q."/>
            <person name="Fan D."/>
            <person name="Mu J."/>
            <person name="Shangguan Y."/>
            <person name="Feng Q."/>
            <person name="Guan J."/>
            <person name="Ying K."/>
            <person name="Zhang Y."/>
            <person name="Lin Z."/>
            <person name="Sun Z."/>
            <person name="Qian Q."/>
            <person name="Lu Y."/>
            <person name="Han B."/>
        </authorList>
    </citation>
    <scope>NUCLEOTIDE SEQUENCE [LARGE SCALE MRNA]</scope>
    <source>
        <strain>cv. Guang-Lu-Ai No.4</strain>
    </source>
</reference>
<reference key="4">
    <citation type="journal article" date="2003" name="Plant J.">
        <title>Three rice nicotianamine synthase genes, OsNAS1, OsNAS2, and OsNAS3 are expressed in cells involved in long-distance transport of iron and differentially regulated by iron.</title>
        <authorList>
            <person name="Inoue H."/>
            <person name="Higuchi K."/>
            <person name="Takahashi M."/>
            <person name="Nakanishi H."/>
            <person name="Mori S."/>
            <person name="Nishizawa N.K."/>
        </authorList>
    </citation>
    <scope>FUNCTION</scope>
    <scope>TISSUE SPECIFICITY</scope>
    <scope>INDUCTION</scope>
</reference>
<accession>A2XFU4</accession>
<accession>Q9SXQ7</accession>
<comment type="function">
    <text evidence="1 2">Synthesizes nicotianamine, a polyamine that is the first intermediate in the synthesis of the phytosiderophores of the mugineic acid type found in gramineae which serve as a sensor for the physiological iron status within the plant, and/or might be involved in the transport of iron.</text>
</comment>
<comment type="catalytic activity">
    <reaction>
        <text>3 S-adenosyl-L-methionine = nicotianamine + 3 S-methyl-5'-thioadenosine + 3 H(+)</text>
        <dbReference type="Rhea" id="RHEA:16481"/>
        <dbReference type="ChEBI" id="CHEBI:15378"/>
        <dbReference type="ChEBI" id="CHEBI:17509"/>
        <dbReference type="ChEBI" id="CHEBI:58249"/>
        <dbReference type="ChEBI" id="CHEBI:59789"/>
        <dbReference type="EC" id="2.5.1.43"/>
    </reaction>
</comment>
<comment type="tissue specificity">
    <text evidence="1 2">Expressed in roots.</text>
</comment>
<comment type="induction">
    <text evidence="1 2">By iron deficiency in roots and chlorotic leaves.</text>
</comment>
<comment type="similarity">
    <text evidence="3">Belongs to the nicotianamine synthase (NAS)-like family.</text>
</comment>
<keyword id="KW-1185">Reference proteome</keyword>
<keyword id="KW-0949">S-adenosyl-L-methionine</keyword>
<keyword id="KW-0808">Transferase</keyword>
<feature type="chain" id="PRO_0000300238" description="Nicotianamine synthase 1">
    <location>
        <begin position="1"/>
        <end position="332"/>
    </location>
</feature>
<feature type="sequence conflict" description="In Ref. 2; EAY89704." evidence="3" ref="2">
    <original>N</original>
    <variation>S</variation>
    <location>
        <position position="91"/>
    </location>
</feature>
<feature type="sequence conflict" description="In Ref. 2; EAY89704." evidence="3" ref="2">
    <original>G</original>
    <variation>E</variation>
    <location>
        <position position="216"/>
    </location>
</feature>
<feature type="sequence conflict" description="In Ref. 1; BAA74588/BAB17825." evidence="3" ref="1">
    <original>S</original>
    <variation>T</variation>
    <location>
        <position position="235"/>
    </location>
</feature>
<feature type="sequence conflict" description="In Ref. 2; EAY89704." evidence="3" ref="2">
    <original>P</original>
    <variation>L</variation>
    <location>
        <position position="249"/>
    </location>
</feature>
<feature type="sequence conflict" description="In Ref. 2; EAY89704." evidence="3" ref="2">
    <original>V</original>
    <variation>I</variation>
    <location>
        <position position="252"/>
    </location>
</feature>
<feature type="sequence conflict" description="In Ref. 2; EAY89704." evidence="3" ref="2">
    <original>C</original>
    <variation>Y</variation>
    <location>
        <position position="263"/>
    </location>
</feature>
<feature type="sequence conflict" description="In Ref. 2; EAY89704." evidence="3" ref="2">
    <original>E</original>
    <variation>D</variation>
    <location>
        <position position="266"/>
    </location>
</feature>
<sequence length="332" mass="34933">MEAQNQEVAALVEKIAGLHAAISKLPSLSPSAEVDALFTDLVTACVPASPVDVAKLGPEAQAMREELIRLCSAAEGHLEAHYADMLAAFDNPLDHLARFPYYGNYVNLSKLEYDLLVRYVPGIAPTRVAFVGSGPLPFSSLVLAAHHLPDAVFDNYDRCGAANERARRLFRGADEGLGARMAFHTADVATLTGELGAYDVVFLAALVGMAAEEKAGVIAHLGAHMADGAALVVRSAHGARGFLYPIVDPEDVRRGGFDVLAVCHPEDEVINSVIVARKVGAAAAAAAARRDELADSRGVVLPVVGPPSTCCKVEASAVEKAEEFAANKELSV</sequence>
<dbReference type="EC" id="2.5.1.43"/>
<dbReference type="EMBL" id="AB021746">
    <property type="protein sequence ID" value="BAA74588.2"/>
    <property type="molecule type" value="mRNA"/>
</dbReference>
<dbReference type="EMBL" id="AB046401">
    <property type="protein sequence ID" value="BAB17825.1"/>
    <property type="molecule type" value="Genomic_DNA"/>
</dbReference>
<dbReference type="EMBL" id="CM000128">
    <property type="protein sequence ID" value="EAY89704.1"/>
    <property type="molecule type" value="Genomic_DNA"/>
</dbReference>
<dbReference type="EMBL" id="CT829820">
    <property type="status" value="NOT_ANNOTATED_CDS"/>
    <property type="molecule type" value="mRNA"/>
</dbReference>
<dbReference type="SMR" id="A2XFU4"/>
<dbReference type="STRING" id="39946.A2XFU4"/>
<dbReference type="HOGENOM" id="CLU_031919_0_0_1"/>
<dbReference type="BioCyc" id="MetaCyc:MONOMER-13933"/>
<dbReference type="BRENDA" id="2.5.1.43">
    <property type="organism ID" value="11590"/>
</dbReference>
<dbReference type="Proteomes" id="UP000007015">
    <property type="component" value="Chromosome 3"/>
</dbReference>
<dbReference type="GO" id="GO:0030410">
    <property type="term" value="F:nicotianamine synthase activity"/>
    <property type="evidence" value="ECO:0007669"/>
    <property type="project" value="UniProtKB-EC"/>
</dbReference>
<dbReference type="GO" id="GO:0030418">
    <property type="term" value="P:nicotianamine biosynthetic process"/>
    <property type="evidence" value="ECO:0007669"/>
    <property type="project" value="InterPro"/>
</dbReference>
<dbReference type="Gene3D" id="3.40.50.150">
    <property type="entry name" value="Vaccinia Virus protein VP39"/>
    <property type="match status" value="1"/>
</dbReference>
<dbReference type="InterPro" id="IPR004298">
    <property type="entry name" value="Nicotian_synth"/>
</dbReference>
<dbReference type="InterPro" id="IPR029063">
    <property type="entry name" value="SAM-dependent_MTases_sf"/>
</dbReference>
<dbReference type="PANTHER" id="PTHR32266:SF10">
    <property type="entry name" value="NICOTIANAMINE SYNTHASE 2"/>
    <property type="match status" value="1"/>
</dbReference>
<dbReference type="PANTHER" id="PTHR32266">
    <property type="entry name" value="NICOTIANAMINE SYNTHASE 3"/>
    <property type="match status" value="1"/>
</dbReference>
<dbReference type="Pfam" id="PF03059">
    <property type="entry name" value="NAS"/>
    <property type="match status" value="1"/>
</dbReference>
<dbReference type="SUPFAM" id="SSF53335">
    <property type="entry name" value="S-adenosyl-L-methionine-dependent methyltransferases"/>
    <property type="match status" value="1"/>
</dbReference>
<dbReference type="PROSITE" id="PS51142">
    <property type="entry name" value="NAS"/>
    <property type="match status" value="1"/>
</dbReference>
<evidence type="ECO:0000269" key="1">
    <source>
    </source>
</evidence>
<evidence type="ECO:0000269" key="2">
    <source>
    </source>
</evidence>
<evidence type="ECO:0000305" key="3"/>
<proteinExistence type="evidence at transcript level"/>
<organism>
    <name type="scientific">Oryza sativa subsp. indica</name>
    <name type="common">Rice</name>
    <dbReference type="NCBI Taxonomy" id="39946"/>
    <lineage>
        <taxon>Eukaryota</taxon>
        <taxon>Viridiplantae</taxon>
        <taxon>Streptophyta</taxon>
        <taxon>Embryophyta</taxon>
        <taxon>Tracheophyta</taxon>
        <taxon>Spermatophyta</taxon>
        <taxon>Magnoliopsida</taxon>
        <taxon>Liliopsida</taxon>
        <taxon>Poales</taxon>
        <taxon>Poaceae</taxon>
        <taxon>BOP clade</taxon>
        <taxon>Oryzoideae</taxon>
        <taxon>Oryzeae</taxon>
        <taxon>Oryzinae</taxon>
        <taxon>Oryza</taxon>
        <taxon>Oryza sativa</taxon>
    </lineage>
</organism>
<protein>
    <recommendedName>
        <fullName>Nicotianamine synthase 1</fullName>
        <ecNumber>2.5.1.43</ecNumber>
    </recommendedName>
    <alternativeName>
        <fullName>S-adenosyl-L-methionine:S-adenosyl-L-methionine:S-adenosyl-methionine 3-amino-3-carboxypropyltransferase 1</fullName>
        <shortName>OsNAS1</shortName>
    </alternativeName>
</protein>